<sequence>MAGGLKKAMVYLGLAEDNQELHSAPSGMSHLRRVPHPKQQMSEIFTFHPKKYSEVSGIVERFRQNIPVIIDMSQLSDTDARRMIDFASGLSQGLVGKIERVVGKVFLLSPEHISISTESKKEE</sequence>
<protein>
    <recommendedName>
        <fullName evidence="1">Cell division protein SepF</fullName>
    </recommendedName>
</protein>
<accession>Q83I43</accession>
<proteinExistence type="inferred from homology"/>
<dbReference type="EMBL" id="BX251410">
    <property type="protein sequence ID" value="CAD66924.1"/>
    <property type="molecule type" value="Genomic_DNA"/>
</dbReference>
<dbReference type="RefSeq" id="WP_011096205.1">
    <property type="nucleotide sequence ID" value="NC_004551.1"/>
</dbReference>
<dbReference type="SMR" id="Q83I43"/>
<dbReference type="GeneID" id="67388022"/>
<dbReference type="KEGG" id="tws:TW248"/>
<dbReference type="HOGENOM" id="CLU_078499_0_2_11"/>
<dbReference type="GO" id="GO:0005737">
    <property type="term" value="C:cytoplasm"/>
    <property type="evidence" value="ECO:0007669"/>
    <property type="project" value="UniProtKB-SubCell"/>
</dbReference>
<dbReference type="GO" id="GO:0000917">
    <property type="term" value="P:division septum assembly"/>
    <property type="evidence" value="ECO:0007669"/>
    <property type="project" value="UniProtKB-KW"/>
</dbReference>
<dbReference type="GO" id="GO:0043093">
    <property type="term" value="P:FtsZ-dependent cytokinesis"/>
    <property type="evidence" value="ECO:0007669"/>
    <property type="project" value="UniProtKB-UniRule"/>
</dbReference>
<dbReference type="Gene3D" id="3.30.110.150">
    <property type="entry name" value="SepF-like protein"/>
    <property type="match status" value="1"/>
</dbReference>
<dbReference type="HAMAP" id="MF_01197">
    <property type="entry name" value="SepF"/>
    <property type="match status" value="1"/>
</dbReference>
<dbReference type="InterPro" id="IPR023052">
    <property type="entry name" value="Cell_div_SepF"/>
</dbReference>
<dbReference type="InterPro" id="IPR007561">
    <property type="entry name" value="Cell_div_SepF/SepF-rel"/>
</dbReference>
<dbReference type="InterPro" id="IPR038594">
    <property type="entry name" value="SepF-like_sf"/>
</dbReference>
<dbReference type="PANTHER" id="PTHR35798">
    <property type="entry name" value="CELL DIVISION PROTEIN SEPF"/>
    <property type="match status" value="1"/>
</dbReference>
<dbReference type="PANTHER" id="PTHR35798:SF1">
    <property type="entry name" value="CELL DIVISION PROTEIN SEPF"/>
    <property type="match status" value="1"/>
</dbReference>
<dbReference type="Pfam" id="PF04472">
    <property type="entry name" value="SepF"/>
    <property type="match status" value="1"/>
</dbReference>
<feature type="chain" id="PRO_0000334136" description="Cell division protein SepF">
    <location>
        <begin position="1"/>
        <end position="123"/>
    </location>
</feature>
<organism>
    <name type="scientific">Tropheryma whipplei (strain TW08/27)</name>
    <name type="common">Whipple's bacillus</name>
    <dbReference type="NCBI Taxonomy" id="218496"/>
    <lineage>
        <taxon>Bacteria</taxon>
        <taxon>Bacillati</taxon>
        <taxon>Actinomycetota</taxon>
        <taxon>Actinomycetes</taxon>
        <taxon>Micrococcales</taxon>
        <taxon>Tropherymataceae</taxon>
        <taxon>Tropheryma</taxon>
    </lineage>
</organism>
<gene>
    <name evidence="1" type="primary">sepF</name>
    <name type="ordered locus">TW248</name>
</gene>
<evidence type="ECO:0000255" key="1">
    <source>
        <dbReference type="HAMAP-Rule" id="MF_01197"/>
    </source>
</evidence>
<name>SEPF_TROW8</name>
<keyword id="KW-0131">Cell cycle</keyword>
<keyword id="KW-0132">Cell division</keyword>
<keyword id="KW-0963">Cytoplasm</keyword>
<keyword id="KW-0717">Septation</keyword>
<reference key="1">
    <citation type="journal article" date="2003" name="Lancet">
        <title>Sequencing and analysis of the genome of the Whipple's disease bacterium Tropheryma whipplei.</title>
        <authorList>
            <person name="Bentley S.D."/>
            <person name="Maiwald M."/>
            <person name="Murphy L.D."/>
            <person name="Pallen M.J."/>
            <person name="Yeats C.A."/>
            <person name="Dover L.G."/>
            <person name="Norbertczak H.T."/>
            <person name="Besra G.S."/>
            <person name="Quail M.A."/>
            <person name="Harris D.E."/>
            <person name="von Herbay A."/>
            <person name="Goble A."/>
            <person name="Rutter S."/>
            <person name="Squares R."/>
            <person name="Squares S."/>
            <person name="Barrell B.G."/>
            <person name="Parkhill J."/>
            <person name="Relman D.A."/>
        </authorList>
    </citation>
    <scope>NUCLEOTIDE SEQUENCE [LARGE SCALE GENOMIC DNA]</scope>
    <source>
        <strain>TW08/27</strain>
    </source>
</reference>
<comment type="function">
    <text evidence="1">Cell division protein that is part of the divisome complex and is recruited early to the Z-ring. Probably stimulates Z-ring formation, perhaps through the cross-linking of FtsZ protofilaments. Its function overlaps with FtsA.</text>
</comment>
<comment type="subunit">
    <text evidence="1">Homodimer. Interacts with FtsZ.</text>
</comment>
<comment type="subcellular location">
    <subcellularLocation>
        <location evidence="1">Cytoplasm</location>
    </subcellularLocation>
    <text evidence="1">Localizes to the division site, in a FtsZ-dependent manner.</text>
</comment>
<comment type="similarity">
    <text evidence="1">Belongs to the SepF family.</text>
</comment>